<organism>
    <name type="scientific">Escherichia coli O157:H7</name>
    <dbReference type="NCBI Taxonomy" id="83334"/>
    <lineage>
        <taxon>Bacteria</taxon>
        <taxon>Pseudomonadati</taxon>
        <taxon>Pseudomonadota</taxon>
        <taxon>Gammaproteobacteria</taxon>
        <taxon>Enterobacterales</taxon>
        <taxon>Enterobacteriaceae</taxon>
        <taxon>Escherichia</taxon>
    </lineage>
</organism>
<accession>P0C0U5</accession>
<accession>P17116</accession>
<accession>P75814</accession>
<name>RIMK_ECO57</name>
<keyword id="KW-0067">ATP-binding</keyword>
<keyword id="KW-0436">Ligase</keyword>
<keyword id="KW-0460">Magnesium</keyword>
<keyword id="KW-0464">Manganese</keyword>
<keyword id="KW-0479">Metal-binding</keyword>
<keyword id="KW-0547">Nucleotide-binding</keyword>
<keyword id="KW-0648">Protein biosynthesis</keyword>
<keyword id="KW-1185">Reference proteome</keyword>
<reference key="1">
    <citation type="journal article" date="2001" name="Nature">
        <title>Genome sequence of enterohaemorrhagic Escherichia coli O157:H7.</title>
        <authorList>
            <person name="Perna N.T."/>
            <person name="Plunkett G. III"/>
            <person name="Burland V."/>
            <person name="Mau B."/>
            <person name="Glasner J.D."/>
            <person name="Rose D.J."/>
            <person name="Mayhew G.F."/>
            <person name="Evans P.S."/>
            <person name="Gregor J."/>
            <person name="Kirkpatrick H.A."/>
            <person name="Posfai G."/>
            <person name="Hackett J."/>
            <person name="Klink S."/>
            <person name="Boutin A."/>
            <person name="Shao Y."/>
            <person name="Miller L."/>
            <person name="Grotbeck E.J."/>
            <person name="Davis N.W."/>
            <person name="Lim A."/>
            <person name="Dimalanta E.T."/>
            <person name="Potamousis K."/>
            <person name="Apodaca J."/>
            <person name="Anantharaman T.S."/>
            <person name="Lin J."/>
            <person name="Yen G."/>
            <person name="Schwartz D.C."/>
            <person name="Welch R.A."/>
            <person name="Blattner F.R."/>
        </authorList>
    </citation>
    <scope>NUCLEOTIDE SEQUENCE [LARGE SCALE GENOMIC DNA]</scope>
    <source>
        <strain>O157:H7 / EDL933 / ATCC 700927 / EHEC</strain>
    </source>
</reference>
<reference key="2">
    <citation type="journal article" date="2001" name="DNA Res.">
        <title>Complete genome sequence of enterohemorrhagic Escherichia coli O157:H7 and genomic comparison with a laboratory strain K-12.</title>
        <authorList>
            <person name="Hayashi T."/>
            <person name="Makino K."/>
            <person name="Ohnishi M."/>
            <person name="Kurokawa K."/>
            <person name="Ishii K."/>
            <person name="Yokoyama K."/>
            <person name="Han C.-G."/>
            <person name="Ohtsubo E."/>
            <person name="Nakayama K."/>
            <person name="Murata T."/>
            <person name="Tanaka M."/>
            <person name="Tobe T."/>
            <person name="Iida T."/>
            <person name="Takami H."/>
            <person name="Honda T."/>
            <person name="Sasakawa C."/>
            <person name="Ogasawara N."/>
            <person name="Yasunaga T."/>
            <person name="Kuhara S."/>
            <person name="Shiba T."/>
            <person name="Hattori M."/>
            <person name="Shinagawa H."/>
        </authorList>
    </citation>
    <scope>NUCLEOTIDE SEQUENCE [LARGE SCALE GENOMIC DNA]</scope>
    <source>
        <strain>O157:H7 / Sakai / RIMD 0509952 / EHEC</strain>
    </source>
</reference>
<sequence>MKIAILSRDGTLYSCKRLREAAIQRGHLVEILDPLSCYMNINPAASSIHYKGRKLPHFDAVIPRIGTAITFYGTAALRQFEMLGSYPLNESVAIARARDKLRSMQLLARQGIDLPVTGIAHSPDDTSDLIDMVGGAPLVVKLVEGTQGIGVVLAETRQAAESVIDAFRGLNAHILVQEYIKEAQGCDIRCLVVGDEVVAAIERRAKEGDFRSNLHRGGAASVASITPQEREIAIKAARTMALDVAGVDILRANRGPLVMEVNASPGLEGIEKTTGIDIAGKMIRWIERHATTEYCLKTGG</sequence>
<dbReference type="EC" id="6.3.2.-" evidence="1"/>
<dbReference type="EMBL" id="AE005174">
    <property type="protein sequence ID" value="AAG55228.1"/>
    <property type="molecule type" value="Genomic_DNA"/>
</dbReference>
<dbReference type="EMBL" id="BA000007">
    <property type="protein sequence ID" value="BAB34355.1"/>
    <property type="molecule type" value="Genomic_DNA"/>
</dbReference>
<dbReference type="PIR" id="D90745">
    <property type="entry name" value="D90745"/>
</dbReference>
<dbReference type="RefSeq" id="NP_308959.1">
    <property type="nucleotide sequence ID" value="NC_002695.1"/>
</dbReference>
<dbReference type="RefSeq" id="WP_000684321.1">
    <property type="nucleotide sequence ID" value="NZ_VOAI01000006.1"/>
</dbReference>
<dbReference type="SMR" id="P0C0U5"/>
<dbReference type="STRING" id="155864.Z1079"/>
<dbReference type="GeneID" id="917687"/>
<dbReference type="GeneID" id="93776570"/>
<dbReference type="KEGG" id="ece:Z1079"/>
<dbReference type="KEGG" id="ecs:ECs_0932"/>
<dbReference type="PATRIC" id="fig|386585.9.peg.1049"/>
<dbReference type="eggNOG" id="COG0189">
    <property type="taxonomic scope" value="Bacteria"/>
</dbReference>
<dbReference type="HOGENOM" id="CLU_054353_0_1_6"/>
<dbReference type="OMA" id="CYMNIAS"/>
<dbReference type="Proteomes" id="UP000000558">
    <property type="component" value="Chromosome"/>
</dbReference>
<dbReference type="Proteomes" id="UP000002519">
    <property type="component" value="Chromosome"/>
</dbReference>
<dbReference type="GO" id="GO:0005737">
    <property type="term" value="C:cytoplasm"/>
    <property type="evidence" value="ECO:0007669"/>
    <property type="project" value="TreeGrafter"/>
</dbReference>
<dbReference type="GO" id="GO:0005524">
    <property type="term" value="F:ATP binding"/>
    <property type="evidence" value="ECO:0007669"/>
    <property type="project" value="UniProtKB-UniRule"/>
</dbReference>
<dbReference type="GO" id="GO:0046872">
    <property type="term" value="F:metal ion binding"/>
    <property type="evidence" value="ECO:0007669"/>
    <property type="project" value="UniProtKB-KW"/>
</dbReference>
<dbReference type="GO" id="GO:0018169">
    <property type="term" value="F:ribosomal S6-glutamic acid ligase activity"/>
    <property type="evidence" value="ECO:0007669"/>
    <property type="project" value="UniProtKB-UniRule"/>
</dbReference>
<dbReference type="GO" id="GO:0036211">
    <property type="term" value="P:protein modification process"/>
    <property type="evidence" value="ECO:0007669"/>
    <property type="project" value="InterPro"/>
</dbReference>
<dbReference type="GO" id="GO:0009432">
    <property type="term" value="P:SOS response"/>
    <property type="evidence" value="ECO:0007669"/>
    <property type="project" value="TreeGrafter"/>
</dbReference>
<dbReference type="GO" id="GO:0006412">
    <property type="term" value="P:translation"/>
    <property type="evidence" value="ECO:0007669"/>
    <property type="project" value="UniProtKB-KW"/>
</dbReference>
<dbReference type="FunFam" id="3.40.50.20:FF:000004">
    <property type="entry name" value="Probable alpha-L-glutamate ligase"/>
    <property type="match status" value="1"/>
</dbReference>
<dbReference type="FunFam" id="3.30.1490.20:FF:000005">
    <property type="entry name" value="Probable alpha-L-glutamate ligase 1"/>
    <property type="match status" value="1"/>
</dbReference>
<dbReference type="FunFam" id="3.30.470.20:FF:000016">
    <property type="entry name" value="Ribosomal protein S6--L-glutamate ligase"/>
    <property type="match status" value="1"/>
</dbReference>
<dbReference type="Gene3D" id="3.40.50.20">
    <property type="match status" value="1"/>
</dbReference>
<dbReference type="Gene3D" id="3.30.1490.20">
    <property type="entry name" value="ATP-grasp fold, A domain"/>
    <property type="match status" value="1"/>
</dbReference>
<dbReference type="Gene3D" id="3.30.470.20">
    <property type="entry name" value="ATP-grasp fold, B domain"/>
    <property type="match status" value="1"/>
</dbReference>
<dbReference type="HAMAP" id="MF_01552">
    <property type="entry name" value="RimK"/>
    <property type="match status" value="1"/>
</dbReference>
<dbReference type="InterPro" id="IPR011761">
    <property type="entry name" value="ATP-grasp"/>
</dbReference>
<dbReference type="InterPro" id="IPR013651">
    <property type="entry name" value="ATP-grasp_RimK-type"/>
</dbReference>
<dbReference type="InterPro" id="IPR013815">
    <property type="entry name" value="ATP_grasp_subdomain_1"/>
</dbReference>
<dbReference type="InterPro" id="IPR023533">
    <property type="entry name" value="RimK"/>
</dbReference>
<dbReference type="InterPro" id="IPR041107">
    <property type="entry name" value="Rimk_N"/>
</dbReference>
<dbReference type="InterPro" id="IPR004666">
    <property type="entry name" value="Rp_bS6_RimK/Lys_biosynth_LsyX"/>
</dbReference>
<dbReference type="NCBIfam" id="NF007764">
    <property type="entry name" value="PRK10446.1"/>
    <property type="match status" value="1"/>
</dbReference>
<dbReference type="NCBIfam" id="TIGR00768">
    <property type="entry name" value="rimK_fam"/>
    <property type="match status" value="1"/>
</dbReference>
<dbReference type="PANTHER" id="PTHR21621:SF7">
    <property type="entry name" value="RIBOSOMAL PROTEIN BS6--L-GLUTAMATE LIGASE"/>
    <property type="match status" value="1"/>
</dbReference>
<dbReference type="PANTHER" id="PTHR21621">
    <property type="entry name" value="RIBOSOMAL PROTEIN S6 MODIFICATION PROTEIN"/>
    <property type="match status" value="1"/>
</dbReference>
<dbReference type="Pfam" id="PF08443">
    <property type="entry name" value="RimK"/>
    <property type="match status" value="1"/>
</dbReference>
<dbReference type="Pfam" id="PF18030">
    <property type="entry name" value="Rimk_N"/>
    <property type="match status" value="1"/>
</dbReference>
<dbReference type="SUPFAM" id="SSF56059">
    <property type="entry name" value="Glutathione synthetase ATP-binding domain-like"/>
    <property type="match status" value="1"/>
</dbReference>
<dbReference type="PROSITE" id="PS50975">
    <property type="entry name" value="ATP_GRASP"/>
    <property type="match status" value="1"/>
</dbReference>
<comment type="function">
    <text evidence="1">An L-glutamate ligase that catalyzes the ATP-dependent post-translational addition of glutamate residues to the C-terminus of ribosomal protein bS6 (RpsF). Is also able to catalyze the synthesis of poly-alpha-glutamate in vitro, via ATP hydrolysis from unprotected glutamate as substrate. The number of glutamate residues added to either RpsF or to poly-alpha-glutamate changes with pH.</text>
</comment>
<comment type="cofactor">
    <cofactor evidence="1">
        <name>Mg(2+)</name>
        <dbReference type="ChEBI" id="CHEBI:18420"/>
    </cofactor>
    <cofactor evidence="1">
        <name>Mn(2+)</name>
        <dbReference type="ChEBI" id="CHEBI:29035"/>
    </cofactor>
    <text evidence="1">Binds 2 magnesium or manganese ions per subunit.</text>
</comment>
<comment type="similarity">
    <text evidence="1">Belongs to the RimK family.</text>
</comment>
<gene>
    <name evidence="1" type="primary">rimK</name>
    <name type="ordered locus">Z1079</name>
    <name type="ordered locus">ECs0932</name>
</gene>
<feature type="chain" id="PRO_0000205456" description="Ribosomal protein bS6--L-glutamate ligase">
    <location>
        <begin position="1"/>
        <end position="300"/>
    </location>
</feature>
<feature type="domain" description="ATP-grasp" evidence="1">
    <location>
        <begin position="104"/>
        <end position="287"/>
    </location>
</feature>
<feature type="binding site" evidence="1">
    <location>
        <position position="141"/>
    </location>
    <ligand>
        <name>ATP</name>
        <dbReference type="ChEBI" id="CHEBI:30616"/>
    </ligand>
</feature>
<feature type="binding site" evidence="1">
    <location>
        <begin position="178"/>
        <end position="179"/>
    </location>
    <ligand>
        <name>ATP</name>
        <dbReference type="ChEBI" id="CHEBI:30616"/>
    </ligand>
</feature>
<feature type="binding site" evidence="1">
    <location>
        <position position="187"/>
    </location>
    <ligand>
        <name>ATP</name>
        <dbReference type="ChEBI" id="CHEBI:30616"/>
    </ligand>
</feature>
<feature type="binding site" evidence="1">
    <location>
        <begin position="211"/>
        <end position="213"/>
    </location>
    <ligand>
        <name>ATP</name>
        <dbReference type="ChEBI" id="CHEBI:30616"/>
    </ligand>
</feature>
<feature type="binding site" evidence="1">
    <location>
        <position position="248"/>
    </location>
    <ligand>
        <name>Mg(2+)</name>
        <dbReference type="ChEBI" id="CHEBI:18420"/>
        <label>1</label>
    </ligand>
</feature>
<feature type="binding site" evidence="1">
    <location>
        <position position="248"/>
    </location>
    <ligand>
        <name>Mn(2+)</name>
        <dbReference type="ChEBI" id="CHEBI:29035"/>
        <label>1</label>
    </ligand>
</feature>
<feature type="binding site" evidence="1">
    <location>
        <position position="260"/>
    </location>
    <ligand>
        <name>Mg(2+)</name>
        <dbReference type="ChEBI" id="CHEBI:18420"/>
        <label>1</label>
    </ligand>
</feature>
<feature type="binding site" evidence="1">
    <location>
        <position position="260"/>
    </location>
    <ligand>
        <name>Mg(2+)</name>
        <dbReference type="ChEBI" id="CHEBI:18420"/>
        <label>2</label>
    </ligand>
</feature>
<feature type="binding site" evidence="1">
    <location>
        <position position="260"/>
    </location>
    <ligand>
        <name>Mn(2+)</name>
        <dbReference type="ChEBI" id="CHEBI:29035"/>
        <label>1</label>
    </ligand>
</feature>
<feature type="binding site" evidence="1">
    <location>
        <position position="260"/>
    </location>
    <ligand>
        <name>Mn(2+)</name>
        <dbReference type="ChEBI" id="CHEBI:29035"/>
        <label>2</label>
    </ligand>
</feature>
<feature type="binding site" evidence="1">
    <location>
        <position position="262"/>
    </location>
    <ligand>
        <name>Mg(2+)</name>
        <dbReference type="ChEBI" id="CHEBI:18420"/>
        <label>2</label>
    </ligand>
</feature>
<feature type="binding site" evidence="1">
    <location>
        <position position="262"/>
    </location>
    <ligand>
        <name>Mn(2+)</name>
        <dbReference type="ChEBI" id="CHEBI:29035"/>
        <label>2</label>
    </ligand>
</feature>
<protein>
    <recommendedName>
        <fullName evidence="1">Ribosomal protein bS6--L-glutamate ligase</fullName>
        <ecNumber evidence="1">6.3.2.-</ecNumber>
    </recommendedName>
    <alternativeName>
        <fullName evidence="1">Poly-alpha-glutamate synthase</fullName>
    </alternativeName>
    <alternativeName>
        <fullName evidence="1">Ribosomal protein bS6 modification protein</fullName>
    </alternativeName>
</protein>
<proteinExistence type="inferred from homology"/>
<evidence type="ECO:0000255" key="1">
    <source>
        <dbReference type="HAMAP-Rule" id="MF_01552"/>
    </source>
</evidence>